<organism>
    <name type="scientific">Sulfurisphaera tokodaii (strain DSM 16993 / JCM 10545 / NBRC 100140 / 7)</name>
    <name type="common">Sulfolobus tokodaii</name>
    <dbReference type="NCBI Taxonomy" id="273063"/>
    <lineage>
        <taxon>Archaea</taxon>
        <taxon>Thermoproteota</taxon>
        <taxon>Thermoprotei</taxon>
        <taxon>Sulfolobales</taxon>
        <taxon>Sulfolobaceae</taxon>
        <taxon>Sulfurisphaera</taxon>
    </lineage>
</organism>
<feature type="chain" id="PRO_0000071730" description="Membrane-associated ATPase epsilon chain">
    <location>
        <begin position="1"/>
        <end position="59"/>
    </location>
</feature>
<name>MTPE_SULTO</name>
<comment type="catalytic activity">
    <reaction>
        <text>ATP + H2O + 4 H(+)(in) = ADP + phosphate + 5 H(+)(out)</text>
        <dbReference type="Rhea" id="RHEA:57720"/>
        <dbReference type="ChEBI" id="CHEBI:15377"/>
        <dbReference type="ChEBI" id="CHEBI:15378"/>
        <dbReference type="ChEBI" id="CHEBI:30616"/>
        <dbReference type="ChEBI" id="CHEBI:43474"/>
        <dbReference type="ChEBI" id="CHEBI:456216"/>
        <dbReference type="EC" id="7.1.2.2"/>
    </reaction>
</comment>
<comment type="subunit">
    <text evidence="1">Sul-ATPase is composed of six (or maybe five) subunits: alpha, beta, delta, gamma, C (proteolipid), and possibly epsilon.</text>
</comment>
<comment type="similarity">
    <text evidence="2">To E.hirae NtpH.</text>
</comment>
<comment type="caution">
    <text evidence="3">Was originally reported as originating from S.acidocaldarius.</text>
</comment>
<evidence type="ECO:0000250" key="1"/>
<evidence type="ECO:0000305" key="2"/>
<evidence type="ECO:0000305" key="3">
    <source>
    </source>
</evidence>
<dbReference type="EC" id="7.1.2.2"/>
<dbReference type="EMBL" id="M57238">
    <property type="protein sequence ID" value="AAA72942.1"/>
    <property type="molecule type" value="Genomic_DNA"/>
</dbReference>
<dbReference type="EMBL" id="BA000023">
    <property type="protein sequence ID" value="BAK54575.1"/>
    <property type="molecule type" value="Genomic_DNA"/>
</dbReference>
<dbReference type="PIR" id="C36493">
    <property type="entry name" value="C36493"/>
</dbReference>
<dbReference type="RefSeq" id="WP_010979484.1">
    <property type="nucleotide sequence ID" value="NC_003106.2"/>
</dbReference>
<dbReference type="SMR" id="P62019"/>
<dbReference type="STRING" id="273063.STK_14385"/>
<dbReference type="GeneID" id="1459470"/>
<dbReference type="KEGG" id="sto:STK_14385"/>
<dbReference type="PATRIC" id="fig|273063.9.peg.1639"/>
<dbReference type="eggNOG" id="arCOG07285">
    <property type="taxonomic scope" value="Archaea"/>
</dbReference>
<dbReference type="OrthoDB" id="41378at2157"/>
<dbReference type="Proteomes" id="UP000001015">
    <property type="component" value="Chromosome"/>
</dbReference>
<dbReference type="GO" id="GO:0033178">
    <property type="term" value="C:proton-transporting two-sector ATPase complex, catalytic domain"/>
    <property type="evidence" value="ECO:0007669"/>
    <property type="project" value="InterPro"/>
</dbReference>
<dbReference type="GO" id="GO:0005524">
    <property type="term" value="F:ATP binding"/>
    <property type="evidence" value="ECO:0007669"/>
    <property type="project" value="UniProtKB-KW"/>
</dbReference>
<dbReference type="GO" id="GO:0042626">
    <property type="term" value="F:ATPase-coupled transmembrane transporter activity"/>
    <property type="evidence" value="ECO:0007669"/>
    <property type="project" value="InterPro"/>
</dbReference>
<dbReference type="GO" id="GO:0015986">
    <property type="term" value="P:proton motive force-driven ATP synthesis"/>
    <property type="evidence" value="ECO:0007669"/>
    <property type="project" value="InterPro"/>
</dbReference>
<dbReference type="GO" id="GO:1902600">
    <property type="term" value="P:proton transmembrane transport"/>
    <property type="evidence" value="ECO:0007669"/>
    <property type="project" value="UniProtKB-KW"/>
</dbReference>
<dbReference type="InterPro" id="IPR012508">
    <property type="entry name" value="ATPase_A1-cplx_e-su"/>
</dbReference>
<dbReference type="Pfam" id="PF08112">
    <property type="entry name" value="ATP-synt_E_2"/>
    <property type="match status" value="1"/>
</dbReference>
<reference key="1">
    <citation type="journal article" date="1990" name="J. Biol. Chem.">
        <title>Structure of an ATPase operon of an acidothermophilic archaebacterium, Sulfolobus acidocaldarius.</title>
        <authorList>
            <person name="Denda K."/>
            <person name="Konishi J."/>
            <person name="Hajiro K."/>
            <person name="Oshima T."/>
            <person name="Date T."/>
            <person name="Yoshida M."/>
        </authorList>
    </citation>
    <scope>NUCLEOTIDE SEQUENCE [GENOMIC DNA]</scope>
</reference>
<reference key="2">
    <citation type="journal article" date="2001" name="DNA Res.">
        <title>Complete genome sequence of an aerobic thermoacidophilic Crenarchaeon, Sulfolobus tokodaii strain7.</title>
        <authorList>
            <person name="Kawarabayasi Y."/>
            <person name="Hino Y."/>
            <person name="Horikawa H."/>
            <person name="Jin-no K."/>
            <person name="Takahashi M."/>
            <person name="Sekine M."/>
            <person name="Baba S."/>
            <person name="Ankai A."/>
            <person name="Kosugi H."/>
            <person name="Hosoyama A."/>
            <person name="Fukui S."/>
            <person name="Nagai Y."/>
            <person name="Nishijima K."/>
            <person name="Otsuka R."/>
            <person name="Nakazawa H."/>
            <person name="Takamiya M."/>
            <person name="Kato Y."/>
            <person name="Yoshizawa T."/>
            <person name="Tanaka T."/>
            <person name="Kudoh Y."/>
            <person name="Yamazaki J."/>
            <person name="Kushida N."/>
            <person name="Oguchi A."/>
            <person name="Aoki K."/>
            <person name="Masuda S."/>
            <person name="Yanagii M."/>
            <person name="Nishimura M."/>
            <person name="Yamagishi A."/>
            <person name="Oshima T."/>
            <person name="Kikuchi H."/>
        </authorList>
    </citation>
    <scope>NUCLEOTIDE SEQUENCE [LARGE SCALE GENOMIC DNA]</scope>
    <source>
        <strain>DSM 16993 / JCM 10545 / NBRC 100140 / 7</strain>
    </source>
</reference>
<gene>
    <name type="primary">atpE</name>
    <name type="ordered locus">STK_14385</name>
    <name type="ORF">STS172</name>
</gene>
<proteinExistence type="inferred from homology"/>
<protein>
    <recommendedName>
        <fullName>Membrane-associated ATPase epsilon chain</fullName>
        <ecNumber>7.1.2.2</ecNumber>
    </recommendedName>
    <alternativeName>
        <fullName>Sul-ATPase epsilon chain</fullName>
    </alternativeName>
</protein>
<keyword id="KW-0067">ATP-binding</keyword>
<keyword id="KW-0375">Hydrogen ion transport</keyword>
<keyword id="KW-0406">Ion transport</keyword>
<keyword id="KW-0547">Nucleotide-binding</keyword>
<keyword id="KW-1185">Reference proteome</keyword>
<keyword id="KW-1278">Translocase</keyword>
<keyword id="KW-0813">Transport</keyword>
<sequence>MSEIDKSTIDKYINILKSKLDQKKNELLSKINMEYEKTLKQRLDELEKLKGNILKEVQK</sequence>
<accession>P62019</accession>
<accession>F9VNC9</accession>
<accession>P23039</accession>
<accession>P62018</accession>